<gene>
    <name evidence="1" type="primary">pyrH</name>
    <name type="ordered locus">FP0435</name>
</gene>
<keyword id="KW-0067">ATP-binding</keyword>
<keyword id="KW-0963">Cytoplasm</keyword>
<keyword id="KW-0418">Kinase</keyword>
<keyword id="KW-0547">Nucleotide-binding</keyword>
<keyword id="KW-0665">Pyrimidine biosynthesis</keyword>
<keyword id="KW-1185">Reference proteome</keyword>
<keyword id="KW-0808">Transferase</keyword>
<accession>A6GWS3</accession>
<name>PYRH_FLAPJ</name>
<protein>
    <recommendedName>
        <fullName evidence="1">Uridylate kinase</fullName>
        <shortName evidence="1">UK</shortName>
        <ecNumber evidence="1">2.7.4.22</ecNumber>
    </recommendedName>
    <alternativeName>
        <fullName evidence="1">Uridine monophosphate kinase</fullName>
        <shortName evidence="1">UMP kinase</shortName>
        <shortName evidence="1">UMPK</shortName>
    </alternativeName>
</protein>
<proteinExistence type="inferred from homology"/>
<evidence type="ECO:0000255" key="1">
    <source>
        <dbReference type="HAMAP-Rule" id="MF_01220"/>
    </source>
</evidence>
<sequence>MKYKRILLKLSGEALMGDRQYGIDPKRLAEYADEIKQIHDLGVQIAIVIGGGNIFRGIAGASNGMDRVQGDYMGMLATVINGMALQGALEEKGMLTRLQTALKIEAIAEPYIKRRAVRHLEKNRIVIFGAGTGNPYFTTDTAAVLRGVEVDADVILKGTRVDGIYNVDPEKNKDAVKFDNISFEDVLKKGLNVMDTTAFTLSQENKLPIIVFDMNKEGNLLKICKGENIGTVVNI</sequence>
<feature type="chain" id="PRO_0000323847" description="Uridylate kinase">
    <location>
        <begin position="1"/>
        <end position="235"/>
    </location>
</feature>
<feature type="binding site" evidence="1">
    <location>
        <begin position="9"/>
        <end position="12"/>
    </location>
    <ligand>
        <name>ATP</name>
        <dbReference type="ChEBI" id="CHEBI:30616"/>
    </ligand>
</feature>
<feature type="binding site" evidence="1">
    <location>
        <position position="51"/>
    </location>
    <ligand>
        <name>UMP</name>
        <dbReference type="ChEBI" id="CHEBI:57865"/>
    </ligand>
</feature>
<feature type="binding site" evidence="1">
    <location>
        <position position="52"/>
    </location>
    <ligand>
        <name>ATP</name>
        <dbReference type="ChEBI" id="CHEBI:30616"/>
    </ligand>
</feature>
<feature type="binding site" evidence="1">
    <location>
        <position position="56"/>
    </location>
    <ligand>
        <name>ATP</name>
        <dbReference type="ChEBI" id="CHEBI:30616"/>
    </ligand>
</feature>
<feature type="binding site" evidence="1">
    <location>
        <position position="71"/>
    </location>
    <ligand>
        <name>UMP</name>
        <dbReference type="ChEBI" id="CHEBI:57865"/>
    </ligand>
</feature>
<feature type="binding site" evidence="1">
    <location>
        <begin position="132"/>
        <end position="139"/>
    </location>
    <ligand>
        <name>UMP</name>
        <dbReference type="ChEBI" id="CHEBI:57865"/>
    </ligand>
</feature>
<feature type="binding site" evidence="1">
    <location>
        <position position="159"/>
    </location>
    <ligand>
        <name>ATP</name>
        <dbReference type="ChEBI" id="CHEBI:30616"/>
    </ligand>
</feature>
<feature type="binding site" evidence="1">
    <location>
        <position position="165"/>
    </location>
    <ligand>
        <name>ATP</name>
        <dbReference type="ChEBI" id="CHEBI:30616"/>
    </ligand>
</feature>
<feature type="binding site" evidence="1">
    <location>
        <position position="168"/>
    </location>
    <ligand>
        <name>ATP</name>
        <dbReference type="ChEBI" id="CHEBI:30616"/>
    </ligand>
</feature>
<organism>
    <name type="scientific">Flavobacterium psychrophilum (strain ATCC 49511 / DSM 21280 / CIP 103535 / JIP02/86)</name>
    <dbReference type="NCBI Taxonomy" id="402612"/>
    <lineage>
        <taxon>Bacteria</taxon>
        <taxon>Pseudomonadati</taxon>
        <taxon>Bacteroidota</taxon>
        <taxon>Flavobacteriia</taxon>
        <taxon>Flavobacteriales</taxon>
        <taxon>Flavobacteriaceae</taxon>
        <taxon>Flavobacterium</taxon>
    </lineage>
</organism>
<reference key="1">
    <citation type="journal article" date="2007" name="Nat. Biotechnol.">
        <title>Complete genome sequence of the fish pathogen Flavobacterium psychrophilum.</title>
        <authorList>
            <person name="Duchaud E."/>
            <person name="Boussaha M."/>
            <person name="Loux V."/>
            <person name="Bernardet J.-F."/>
            <person name="Michel C."/>
            <person name="Kerouault B."/>
            <person name="Mondot S."/>
            <person name="Nicolas P."/>
            <person name="Bossy R."/>
            <person name="Caron C."/>
            <person name="Bessieres P."/>
            <person name="Gibrat J.-F."/>
            <person name="Claverol S."/>
            <person name="Dumetz F."/>
            <person name="Le Henaff M."/>
            <person name="Benmansour A."/>
        </authorList>
    </citation>
    <scope>NUCLEOTIDE SEQUENCE [LARGE SCALE GENOMIC DNA]</scope>
    <source>
        <strain>ATCC 49511 / DSM 21280 / CIP 103535 / JIP02/86</strain>
    </source>
</reference>
<comment type="function">
    <text evidence="1">Catalyzes the reversible phosphorylation of UMP to UDP.</text>
</comment>
<comment type="catalytic activity">
    <reaction evidence="1">
        <text>UMP + ATP = UDP + ADP</text>
        <dbReference type="Rhea" id="RHEA:24400"/>
        <dbReference type="ChEBI" id="CHEBI:30616"/>
        <dbReference type="ChEBI" id="CHEBI:57865"/>
        <dbReference type="ChEBI" id="CHEBI:58223"/>
        <dbReference type="ChEBI" id="CHEBI:456216"/>
        <dbReference type="EC" id="2.7.4.22"/>
    </reaction>
</comment>
<comment type="activity regulation">
    <text evidence="1">Inhibited by UTP.</text>
</comment>
<comment type="pathway">
    <text evidence="1">Pyrimidine metabolism; CTP biosynthesis via de novo pathway; UDP from UMP (UMPK route): step 1/1.</text>
</comment>
<comment type="subunit">
    <text evidence="1">Homohexamer.</text>
</comment>
<comment type="subcellular location">
    <subcellularLocation>
        <location evidence="1">Cytoplasm</location>
    </subcellularLocation>
</comment>
<comment type="similarity">
    <text evidence="1">Belongs to the UMP kinase family.</text>
</comment>
<dbReference type="EC" id="2.7.4.22" evidence="1"/>
<dbReference type="EMBL" id="AM398681">
    <property type="protein sequence ID" value="CAL42546.1"/>
    <property type="molecule type" value="Genomic_DNA"/>
</dbReference>
<dbReference type="RefSeq" id="WP_011962604.1">
    <property type="nucleotide sequence ID" value="NC_009613.3"/>
</dbReference>
<dbReference type="RefSeq" id="YP_001295364.1">
    <property type="nucleotide sequence ID" value="NC_009613.3"/>
</dbReference>
<dbReference type="SMR" id="A6GWS3"/>
<dbReference type="STRING" id="402612.FP0435"/>
<dbReference type="EnsemblBacteria" id="CAL42546">
    <property type="protein sequence ID" value="CAL42546"/>
    <property type="gene ID" value="FP0435"/>
</dbReference>
<dbReference type="GeneID" id="66551572"/>
<dbReference type="KEGG" id="fps:FP0435"/>
<dbReference type="PATRIC" id="fig|402612.5.peg.449"/>
<dbReference type="eggNOG" id="COG0528">
    <property type="taxonomic scope" value="Bacteria"/>
</dbReference>
<dbReference type="HOGENOM" id="CLU_033861_0_0_10"/>
<dbReference type="OrthoDB" id="9807458at2"/>
<dbReference type="UniPathway" id="UPA00159">
    <property type="reaction ID" value="UER00275"/>
</dbReference>
<dbReference type="Proteomes" id="UP000006394">
    <property type="component" value="Chromosome"/>
</dbReference>
<dbReference type="GO" id="GO:0005737">
    <property type="term" value="C:cytoplasm"/>
    <property type="evidence" value="ECO:0007669"/>
    <property type="project" value="UniProtKB-SubCell"/>
</dbReference>
<dbReference type="GO" id="GO:0005524">
    <property type="term" value="F:ATP binding"/>
    <property type="evidence" value="ECO:0007669"/>
    <property type="project" value="UniProtKB-KW"/>
</dbReference>
<dbReference type="GO" id="GO:0033862">
    <property type="term" value="F:UMP kinase activity"/>
    <property type="evidence" value="ECO:0007669"/>
    <property type="project" value="UniProtKB-EC"/>
</dbReference>
<dbReference type="GO" id="GO:0044210">
    <property type="term" value="P:'de novo' CTP biosynthetic process"/>
    <property type="evidence" value="ECO:0007669"/>
    <property type="project" value="UniProtKB-UniRule"/>
</dbReference>
<dbReference type="GO" id="GO:0006225">
    <property type="term" value="P:UDP biosynthetic process"/>
    <property type="evidence" value="ECO:0007669"/>
    <property type="project" value="TreeGrafter"/>
</dbReference>
<dbReference type="CDD" id="cd04254">
    <property type="entry name" value="AAK_UMPK-PyrH-Ec"/>
    <property type="match status" value="1"/>
</dbReference>
<dbReference type="FunFam" id="3.40.1160.10:FF:000001">
    <property type="entry name" value="Uridylate kinase"/>
    <property type="match status" value="1"/>
</dbReference>
<dbReference type="Gene3D" id="3.40.1160.10">
    <property type="entry name" value="Acetylglutamate kinase-like"/>
    <property type="match status" value="1"/>
</dbReference>
<dbReference type="HAMAP" id="MF_01220_B">
    <property type="entry name" value="PyrH_B"/>
    <property type="match status" value="1"/>
</dbReference>
<dbReference type="InterPro" id="IPR036393">
    <property type="entry name" value="AceGlu_kinase-like_sf"/>
</dbReference>
<dbReference type="InterPro" id="IPR001048">
    <property type="entry name" value="Asp/Glu/Uridylate_kinase"/>
</dbReference>
<dbReference type="InterPro" id="IPR011817">
    <property type="entry name" value="Uridylate_kinase"/>
</dbReference>
<dbReference type="InterPro" id="IPR015963">
    <property type="entry name" value="Uridylate_kinase_bac"/>
</dbReference>
<dbReference type="NCBIfam" id="TIGR02075">
    <property type="entry name" value="pyrH_bact"/>
    <property type="match status" value="1"/>
</dbReference>
<dbReference type="PANTHER" id="PTHR42833">
    <property type="entry name" value="URIDYLATE KINASE"/>
    <property type="match status" value="1"/>
</dbReference>
<dbReference type="PANTHER" id="PTHR42833:SF4">
    <property type="entry name" value="URIDYLATE KINASE PUMPKIN, CHLOROPLASTIC"/>
    <property type="match status" value="1"/>
</dbReference>
<dbReference type="Pfam" id="PF00696">
    <property type="entry name" value="AA_kinase"/>
    <property type="match status" value="1"/>
</dbReference>
<dbReference type="PIRSF" id="PIRSF005650">
    <property type="entry name" value="Uridylate_kin"/>
    <property type="match status" value="1"/>
</dbReference>
<dbReference type="SUPFAM" id="SSF53633">
    <property type="entry name" value="Carbamate kinase-like"/>
    <property type="match status" value="1"/>
</dbReference>